<organism>
    <name type="scientific">Homo sapiens</name>
    <name type="common">Human</name>
    <dbReference type="NCBI Taxonomy" id="9606"/>
    <lineage>
        <taxon>Eukaryota</taxon>
        <taxon>Metazoa</taxon>
        <taxon>Chordata</taxon>
        <taxon>Craniata</taxon>
        <taxon>Vertebrata</taxon>
        <taxon>Euteleostomi</taxon>
        <taxon>Mammalia</taxon>
        <taxon>Eutheria</taxon>
        <taxon>Euarchontoglires</taxon>
        <taxon>Primates</taxon>
        <taxon>Haplorrhini</taxon>
        <taxon>Catarrhini</taxon>
        <taxon>Hominidae</taxon>
        <taxon>Homo</taxon>
    </lineage>
</organism>
<keyword id="KW-1003">Cell membrane</keyword>
<keyword id="KW-1015">Disulfide bond</keyword>
<keyword id="KW-0297">G-protein coupled receptor</keyword>
<keyword id="KW-0325">Glycoprotein</keyword>
<keyword id="KW-0472">Membrane</keyword>
<keyword id="KW-0552">Olfaction</keyword>
<keyword id="KW-0675">Receptor</keyword>
<keyword id="KW-1185">Reference proteome</keyword>
<keyword id="KW-0716">Sensory transduction</keyword>
<keyword id="KW-0807">Transducer</keyword>
<keyword id="KW-0812">Transmembrane</keyword>
<keyword id="KW-1133">Transmembrane helix</keyword>
<sequence>MTMENYSMAAQFVLDGLTQQAELQLPLFLLFLGIYVVTVVGNLGMILLIAVSPLLHTPMYYFLSSLSFVDFCYSSVITPKMLVNFLGKKNTILYSECMVQLFFFVVFVVAEGYLLTAMAYDRYVAICSPLLYNAIMSSWVCSLLVLAAFFLGFLSALTHTSAMMKLSFCKSHIINHYFCDVLPLLNLSCSNTHLNELLLFIIAGFNTLVPTLAVAVSYAFILYSILHIRSSEGRSKAFGTCSSHLMAVVIFFGSITFMYFKPPSSNSLDQEKVSSVFYTTVIPMLNPLIYSLRNKDVKKALRKVLVGK</sequence>
<feature type="chain" id="PRO_0000150659" description="Olfactory receptor 8D1">
    <location>
        <begin position="1"/>
        <end position="308"/>
    </location>
</feature>
<feature type="topological domain" description="Extracellular" evidence="1">
    <location>
        <begin position="1"/>
        <end position="25"/>
    </location>
</feature>
<feature type="transmembrane region" description="Helical; Name=1" evidence="1">
    <location>
        <begin position="26"/>
        <end position="46"/>
    </location>
</feature>
<feature type="topological domain" description="Cytoplasmic" evidence="1">
    <location>
        <begin position="47"/>
        <end position="54"/>
    </location>
</feature>
<feature type="transmembrane region" description="Helical; Name=2" evidence="1">
    <location>
        <begin position="55"/>
        <end position="75"/>
    </location>
</feature>
<feature type="topological domain" description="Extracellular" evidence="1">
    <location>
        <begin position="76"/>
        <end position="99"/>
    </location>
</feature>
<feature type="transmembrane region" description="Helical; Name=3" evidence="1">
    <location>
        <begin position="100"/>
        <end position="120"/>
    </location>
</feature>
<feature type="topological domain" description="Cytoplasmic" evidence="1">
    <location>
        <begin position="121"/>
        <end position="139"/>
    </location>
</feature>
<feature type="transmembrane region" description="Helical; Name=4" evidence="1">
    <location>
        <begin position="140"/>
        <end position="160"/>
    </location>
</feature>
<feature type="topological domain" description="Extracellular" evidence="1">
    <location>
        <begin position="161"/>
        <end position="197"/>
    </location>
</feature>
<feature type="transmembrane region" description="Helical; Name=5" evidence="1">
    <location>
        <begin position="198"/>
        <end position="217"/>
    </location>
</feature>
<feature type="topological domain" description="Cytoplasmic" evidence="1">
    <location>
        <begin position="218"/>
        <end position="237"/>
    </location>
</feature>
<feature type="transmembrane region" description="Helical; Name=6" evidence="1">
    <location>
        <begin position="238"/>
        <end position="258"/>
    </location>
</feature>
<feature type="topological domain" description="Extracellular" evidence="1">
    <location>
        <begin position="259"/>
        <end position="271"/>
    </location>
</feature>
<feature type="transmembrane region" description="Helical; Name=7" evidence="1">
    <location>
        <begin position="272"/>
        <end position="292"/>
    </location>
</feature>
<feature type="topological domain" description="Cytoplasmic" evidence="1">
    <location>
        <begin position="293"/>
        <end position="308"/>
    </location>
</feature>
<feature type="glycosylation site" description="N-linked (GlcNAc...) asparagine" evidence="1">
    <location>
        <position position="5"/>
    </location>
</feature>
<feature type="glycosylation site" description="N-linked (GlcNAc...) asparagine" evidence="1">
    <location>
        <position position="186"/>
    </location>
</feature>
<feature type="disulfide bond" evidence="2">
    <location>
        <begin position="97"/>
        <end position="189"/>
    </location>
</feature>
<feature type="sequence variant" id="VAR_053242" description="In dbSNP:rs2510433." evidence="3">
    <original>F</original>
    <variation>V</variation>
    <location>
        <position position="102"/>
    </location>
</feature>
<feature type="sequence variant" id="VAR_053243" description="In dbSNP:rs7107539.">
    <original>C</original>
    <variation>W</variation>
    <location>
        <position position="127"/>
    </location>
</feature>
<feature type="sequence variant" id="VAR_024116" description="In dbSNP:rs4936919.">
    <original>L</original>
    <variation>P</variation>
    <location>
        <position position="194"/>
    </location>
</feature>
<evidence type="ECO:0000255" key="1"/>
<evidence type="ECO:0000255" key="2">
    <source>
        <dbReference type="PROSITE-ProRule" id="PRU00521"/>
    </source>
</evidence>
<evidence type="ECO:0000269" key="3">
    <source ref="2"/>
</evidence>
<evidence type="ECO:0000305" key="4"/>
<dbReference type="EMBL" id="AF238489">
    <property type="protein sequence ID" value="AAL32998.1"/>
    <property type="molecule type" value="mRNA"/>
</dbReference>
<dbReference type="EMBL" id="AB065828">
    <property type="protein sequence ID" value="BAC06047.1"/>
    <property type="molecule type" value="Genomic_DNA"/>
</dbReference>
<dbReference type="EMBL" id="CH471065">
    <property type="protein sequence ID" value="EAW67578.1"/>
    <property type="molecule type" value="Genomic_DNA"/>
</dbReference>
<dbReference type="EMBL" id="BC136950">
    <property type="protein sequence ID" value="AAI36951.1"/>
    <property type="molecule type" value="mRNA"/>
</dbReference>
<dbReference type="EMBL" id="BC136954">
    <property type="protein sequence ID" value="AAI36955.1"/>
    <property type="molecule type" value="mRNA"/>
</dbReference>
<dbReference type="EMBL" id="BK004501">
    <property type="protein sequence ID" value="DAA04899.1"/>
    <property type="molecule type" value="Genomic_DNA"/>
</dbReference>
<dbReference type="CCDS" id="CCDS31706.1"/>
<dbReference type="RefSeq" id="NP_001002917.1">
    <property type="nucleotide sequence ID" value="NM_001002917.2"/>
</dbReference>
<dbReference type="SMR" id="Q8WZ84"/>
<dbReference type="FunCoup" id="Q8WZ84">
    <property type="interactions" value="458"/>
</dbReference>
<dbReference type="STRING" id="9606.ENSP00000493365"/>
<dbReference type="GlyCosmos" id="Q8WZ84">
    <property type="glycosylation" value="2 sites, No reported glycans"/>
</dbReference>
<dbReference type="GlyGen" id="Q8WZ84">
    <property type="glycosylation" value="2 sites"/>
</dbReference>
<dbReference type="iPTMnet" id="Q8WZ84"/>
<dbReference type="PhosphoSitePlus" id="Q8WZ84"/>
<dbReference type="BioMuta" id="OR8D1"/>
<dbReference type="DMDM" id="20532189"/>
<dbReference type="MassIVE" id="Q8WZ84"/>
<dbReference type="PaxDb" id="9606-ENSP00000350474"/>
<dbReference type="PeptideAtlas" id="Q8WZ84"/>
<dbReference type="Antibodypedia" id="56808">
    <property type="antibodies" value="72 antibodies from 20 providers"/>
</dbReference>
<dbReference type="DNASU" id="283159"/>
<dbReference type="Ensembl" id="ENST00000357821.2">
    <property type="protein sequence ID" value="ENSP00000350474.2"/>
    <property type="gene ID" value="ENSG00000196341.3"/>
</dbReference>
<dbReference type="Ensembl" id="ENST00000641015.1">
    <property type="protein sequence ID" value="ENSP00000493365.1"/>
    <property type="gene ID" value="ENSG00000196341.3"/>
</dbReference>
<dbReference type="Ensembl" id="ENST00000641897.1">
    <property type="protein sequence ID" value="ENSP00000493091.1"/>
    <property type="gene ID" value="ENSG00000196341.3"/>
</dbReference>
<dbReference type="GeneID" id="283159"/>
<dbReference type="KEGG" id="hsa:283159"/>
<dbReference type="MANE-Select" id="ENST00000641015.1">
    <property type="protein sequence ID" value="ENSP00000493365.1"/>
    <property type="RefSeq nucleotide sequence ID" value="NM_001002917.2"/>
    <property type="RefSeq protein sequence ID" value="NP_001002917.1"/>
</dbReference>
<dbReference type="UCSC" id="uc010sag.3">
    <property type="organism name" value="human"/>
</dbReference>
<dbReference type="AGR" id="HGNC:8481"/>
<dbReference type="CTD" id="283159"/>
<dbReference type="GeneCards" id="OR8D1"/>
<dbReference type="HGNC" id="HGNC:8481">
    <property type="gene designation" value="OR8D1"/>
</dbReference>
<dbReference type="HPA" id="ENSG00000196341">
    <property type="expression patterns" value="Not detected"/>
</dbReference>
<dbReference type="neXtProt" id="NX_Q8WZ84"/>
<dbReference type="OpenTargets" id="ENSG00000196341"/>
<dbReference type="PharmGKB" id="PA32760"/>
<dbReference type="VEuPathDB" id="HostDB:ENSG00000196341"/>
<dbReference type="eggNOG" id="ENOG502T9KP">
    <property type="taxonomic scope" value="Eukaryota"/>
</dbReference>
<dbReference type="GeneTree" id="ENSGT01040000240383"/>
<dbReference type="HOGENOM" id="CLU_012526_1_0_1"/>
<dbReference type="InParanoid" id="Q8WZ84"/>
<dbReference type="OMA" id="KKNMILY"/>
<dbReference type="OrthoDB" id="9444748at2759"/>
<dbReference type="PAN-GO" id="Q8WZ84">
    <property type="GO annotations" value="4 GO annotations based on evolutionary models"/>
</dbReference>
<dbReference type="PhylomeDB" id="Q8WZ84"/>
<dbReference type="TreeFam" id="TF352753"/>
<dbReference type="PathwayCommons" id="Q8WZ84"/>
<dbReference type="Reactome" id="R-HSA-381753">
    <property type="pathway name" value="Olfactory Signaling Pathway"/>
</dbReference>
<dbReference type="Reactome" id="R-HSA-9752946">
    <property type="pathway name" value="Expression and translocation of olfactory receptors"/>
</dbReference>
<dbReference type="BioGRID-ORCS" id="283159">
    <property type="hits" value="141 hits in 739 CRISPR screens"/>
</dbReference>
<dbReference type="GeneWiki" id="OR8D1"/>
<dbReference type="GenomeRNAi" id="283159"/>
<dbReference type="Pharos" id="Q8WZ84">
    <property type="development level" value="Tdark"/>
</dbReference>
<dbReference type="PRO" id="PR:Q8WZ84"/>
<dbReference type="Proteomes" id="UP000005640">
    <property type="component" value="Chromosome 11"/>
</dbReference>
<dbReference type="RNAct" id="Q8WZ84">
    <property type="molecule type" value="protein"/>
</dbReference>
<dbReference type="Bgee" id="ENSG00000196341">
    <property type="expression patterns" value="Expressed in male germ line stem cell (sensu Vertebrata) in testis and 6 other cell types or tissues"/>
</dbReference>
<dbReference type="ExpressionAtlas" id="Q8WZ84">
    <property type="expression patterns" value="baseline and differential"/>
</dbReference>
<dbReference type="GO" id="GO:0005886">
    <property type="term" value="C:plasma membrane"/>
    <property type="evidence" value="ECO:0000304"/>
    <property type="project" value="Reactome"/>
</dbReference>
<dbReference type="GO" id="GO:0004930">
    <property type="term" value="F:G protein-coupled receptor activity"/>
    <property type="evidence" value="ECO:0007669"/>
    <property type="project" value="UniProtKB-KW"/>
</dbReference>
<dbReference type="GO" id="GO:0005549">
    <property type="term" value="F:odorant binding"/>
    <property type="evidence" value="ECO:0000318"/>
    <property type="project" value="GO_Central"/>
</dbReference>
<dbReference type="GO" id="GO:0004984">
    <property type="term" value="F:olfactory receptor activity"/>
    <property type="evidence" value="ECO:0000318"/>
    <property type="project" value="GO_Central"/>
</dbReference>
<dbReference type="GO" id="GO:0007186">
    <property type="term" value="P:G protein-coupled receptor signaling pathway"/>
    <property type="evidence" value="ECO:0000318"/>
    <property type="project" value="GO_Central"/>
</dbReference>
<dbReference type="GO" id="GO:0007608">
    <property type="term" value="P:sensory perception of smell"/>
    <property type="evidence" value="ECO:0000318"/>
    <property type="project" value="GO_Central"/>
</dbReference>
<dbReference type="FunFam" id="1.10.1220.70:FF:000001">
    <property type="entry name" value="Olfactory receptor"/>
    <property type="match status" value="1"/>
</dbReference>
<dbReference type="FunFam" id="1.20.1070.10:FF:000004">
    <property type="entry name" value="Olfactory receptor"/>
    <property type="match status" value="1"/>
</dbReference>
<dbReference type="Gene3D" id="1.20.1070.10">
    <property type="entry name" value="Rhodopsin 7-helix transmembrane proteins"/>
    <property type="match status" value="1"/>
</dbReference>
<dbReference type="InterPro" id="IPR000276">
    <property type="entry name" value="GPCR_Rhodpsn"/>
</dbReference>
<dbReference type="InterPro" id="IPR017452">
    <property type="entry name" value="GPCR_Rhodpsn_7TM"/>
</dbReference>
<dbReference type="InterPro" id="IPR000725">
    <property type="entry name" value="Olfact_rcpt"/>
</dbReference>
<dbReference type="PANTHER" id="PTHR48018">
    <property type="entry name" value="OLFACTORY RECEPTOR"/>
    <property type="match status" value="1"/>
</dbReference>
<dbReference type="Pfam" id="PF13853">
    <property type="entry name" value="7tm_4"/>
    <property type="match status" value="1"/>
</dbReference>
<dbReference type="PRINTS" id="PR00237">
    <property type="entry name" value="GPCRRHODOPSN"/>
</dbReference>
<dbReference type="PRINTS" id="PR00245">
    <property type="entry name" value="OLFACTORYR"/>
</dbReference>
<dbReference type="SMART" id="SM01381">
    <property type="entry name" value="7TM_GPCR_Srsx"/>
    <property type="match status" value="1"/>
</dbReference>
<dbReference type="SUPFAM" id="SSF81321">
    <property type="entry name" value="Family A G protein-coupled receptor-like"/>
    <property type="match status" value="1"/>
</dbReference>
<dbReference type="PROSITE" id="PS00237">
    <property type="entry name" value="G_PROTEIN_RECEP_F1_1"/>
    <property type="match status" value="1"/>
</dbReference>
<dbReference type="PROSITE" id="PS50262">
    <property type="entry name" value="G_PROTEIN_RECEP_F1_2"/>
    <property type="match status" value="1"/>
</dbReference>
<name>OR8D1_HUMAN</name>
<proteinExistence type="evidence at transcript level"/>
<accession>Q8WZ84</accession>
<accession>B2RNL4</accession>
<accession>Q6IEW1</accession>
<accession>Q8NGH0</accession>
<gene>
    <name type="primary">OR8D1</name>
    <name type="synonym">OR8D3</name>
</gene>
<reference key="1">
    <citation type="journal article" date="2001" name="Chem. Senses">
        <title>New GPCRs from a human lingual cDNA library.</title>
        <authorList>
            <person name="Gaudin J.-C."/>
            <person name="Breuils L."/>
            <person name="Haertle T."/>
        </authorList>
    </citation>
    <scope>NUCLEOTIDE SEQUENCE [MRNA]</scope>
    <source>
        <tissue>Tongue</tissue>
    </source>
</reference>
<reference key="2">
    <citation type="submission" date="2001-07" db="EMBL/GenBank/DDBJ databases">
        <title>Genome-wide discovery and analysis of human seven transmembrane helix receptor genes.</title>
        <authorList>
            <person name="Suwa M."/>
            <person name="Sato T."/>
            <person name="Okouchi I."/>
            <person name="Arita M."/>
            <person name="Futami K."/>
            <person name="Matsumoto S."/>
            <person name="Tsutsumi S."/>
            <person name="Aburatani H."/>
            <person name="Asai K."/>
            <person name="Akiyama Y."/>
        </authorList>
    </citation>
    <scope>NUCLEOTIDE SEQUENCE [GENOMIC DNA]</scope>
    <scope>VARIANT VAL-102</scope>
</reference>
<reference key="3">
    <citation type="submission" date="2005-07" db="EMBL/GenBank/DDBJ databases">
        <authorList>
            <person name="Mural R.J."/>
            <person name="Istrail S."/>
            <person name="Sutton G.G."/>
            <person name="Florea L."/>
            <person name="Halpern A.L."/>
            <person name="Mobarry C.M."/>
            <person name="Lippert R."/>
            <person name="Walenz B."/>
            <person name="Shatkay H."/>
            <person name="Dew I."/>
            <person name="Miller J.R."/>
            <person name="Flanigan M.J."/>
            <person name="Edwards N.J."/>
            <person name="Bolanos R."/>
            <person name="Fasulo D."/>
            <person name="Halldorsson B.V."/>
            <person name="Hannenhalli S."/>
            <person name="Turner R."/>
            <person name="Yooseph S."/>
            <person name="Lu F."/>
            <person name="Nusskern D.R."/>
            <person name="Shue B.C."/>
            <person name="Zheng X.H."/>
            <person name="Zhong F."/>
            <person name="Delcher A.L."/>
            <person name="Huson D.H."/>
            <person name="Kravitz S.A."/>
            <person name="Mouchard L."/>
            <person name="Reinert K."/>
            <person name="Remington K.A."/>
            <person name="Clark A.G."/>
            <person name="Waterman M.S."/>
            <person name="Eichler E.E."/>
            <person name="Adams M.D."/>
            <person name="Hunkapiller M.W."/>
            <person name="Myers E.W."/>
            <person name="Venter J.C."/>
        </authorList>
    </citation>
    <scope>NUCLEOTIDE SEQUENCE [LARGE SCALE GENOMIC DNA]</scope>
</reference>
<reference key="4">
    <citation type="journal article" date="2004" name="Genome Res.">
        <title>The status, quality, and expansion of the NIH full-length cDNA project: the Mammalian Gene Collection (MGC).</title>
        <authorList>
            <consortium name="The MGC Project Team"/>
        </authorList>
    </citation>
    <scope>NUCLEOTIDE SEQUENCE [LARGE SCALE MRNA]</scope>
</reference>
<reference key="5">
    <citation type="journal article" date="2004" name="Proc. Natl. Acad. Sci. U.S.A.">
        <title>The human olfactory receptor gene family.</title>
        <authorList>
            <person name="Malnic B."/>
            <person name="Godfrey P.A."/>
            <person name="Buck L.B."/>
        </authorList>
    </citation>
    <scope>IDENTIFICATION</scope>
</reference>
<reference key="6">
    <citation type="journal article" date="2004" name="Proc. Natl. Acad. Sci. U.S.A.">
        <authorList>
            <person name="Malnic B."/>
            <person name="Godfrey P.A."/>
            <person name="Buck L.B."/>
        </authorList>
    </citation>
    <scope>ERRATUM OF PUBMED:14983052</scope>
</reference>
<protein>
    <recommendedName>
        <fullName>Olfactory receptor 8D1</fullName>
    </recommendedName>
    <alternativeName>
        <fullName>OST004</fullName>
    </alternativeName>
    <alternativeName>
        <fullName>Olfactory receptor 8D3</fullName>
    </alternativeName>
    <alternativeName>
        <fullName>Olfactory receptor OR11-301</fullName>
    </alternativeName>
    <alternativeName>
        <fullName>Olfactory receptor-like protein JCG9</fullName>
    </alternativeName>
</protein>
<comment type="function">
    <text evidence="4">Odorant receptor (Potential). May be involved in taste perception.</text>
</comment>
<comment type="subcellular location">
    <subcellularLocation>
        <location>Cell membrane</location>
        <topology>Multi-pass membrane protein</topology>
    </subcellularLocation>
</comment>
<comment type="tissue specificity">
    <text>Expressed in the tongue.</text>
</comment>
<comment type="similarity">
    <text evidence="2">Belongs to the G-protein coupled receptor 1 family.</text>
</comment>
<comment type="online information" name="Human Olfactory Receptor Data Exploratorium (HORDE)">
    <link uri="http://genome.weizmann.ac.il/horde/card/index/symbol:OR8D1"/>
</comment>